<dbReference type="EMBL" id="J01614">
    <property type="protein sequence ID" value="AAA83862.1"/>
    <property type="molecule type" value="Genomic_DNA"/>
</dbReference>
<dbReference type="EMBL" id="U29581">
    <property type="protein sequence ID" value="AAB40486.1"/>
    <property type="molecule type" value="Genomic_DNA"/>
</dbReference>
<dbReference type="EMBL" id="U00096">
    <property type="protein sequence ID" value="AAC75878.1"/>
    <property type="molecule type" value="Genomic_DNA"/>
</dbReference>
<dbReference type="EMBL" id="AP009048">
    <property type="protein sequence ID" value="BAE76908.1"/>
    <property type="molecule type" value="Genomic_DNA"/>
</dbReference>
<dbReference type="EMBL" id="J03732">
    <property type="protein sequence ID" value="AAA23471.1"/>
    <property type="molecule type" value="Genomic_DNA"/>
</dbReference>
<dbReference type="PIR" id="A03565">
    <property type="entry name" value="RGECK"/>
</dbReference>
<dbReference type="RefSeq" id="NP_417316.1">
    <property type="nucleotide sequence ID" value="NC_000913.3"/>
</dbReference>
<dbReference type="RefSeq" id="WP_000741825.1">
    <property type="nucleotide sequence ID" value="NZ_LN832404.1"/>
</dbReference>
<dbReference type="SMR" id="P03030"/>
<dbReference type="BioGRID" id="4262309">
    <property type="interactions" value="107"/>
</dbReference>
<dbReference type="BioGRID" id="851638">
    <property type="interactions" value="2"/>
</dbReference>
<dbReference type="DIP" id="DIP-10135N"/>
<dbReference type="FunCoup" id="P03030">
    <property type="interactions" value="78"/>
</dbReference>
<dbReference type="IntAct" id="P03030">
    <property type="interactions" value="6"/>
</dbReference>
<dbReference type="STRING" id="511145.b2839"/>
<dbReference type="PaxDb" id="511145-b2839"/>
<dbReference type="EnsemblBacteria" id="AAC75878">
    <property type="protein sequence ID" value="AAC75878"/>
    <property type="gene ID" value="b2839"/>
</dbReference>
<dbReference type="GeneID" id="947311"/>
<dbReference type="KEGG" id="ecj:JW2807"/>
<dbReference type="KEGG" id="eco:b2839"/>
<dbReference type="KEGG" id="ecoc:C3026_15590"/>
<dbReference type="PATRIC" id="fig|1411691.4.peg.3895"/>
<dbReference type="EchoBASE" id="EB0546"/>
<dbReference type="eggNOG" id="COG0583">
    <property type="taxonomic scope" value="Bacteria"/>
</dbReference>
<dbReference type="HOGENOM" id="CLU_039613_6_3_6"/>
<dbReference type="InParanoid" id="P03030"/>
<dbReference type="OMA" id="IKPIHRP"/>
<dbReference type="OrthoDB" id="8849678at2"/>
<dbReference type="PhylomeDB" id="P03030"/>
<dbReference type="BioCyc" id="EcoCyc:PD00360"/>
<dbReference type="PRO" id="PR:P03030"/>
<dbReference type="Proteomes" id="UP000000625">
    <property type="component" value="Chromosome"/>
</dbReference>
<dbReference type="GO" id="GO:0005737">
    <property type="term" value="C:cytoplasm"/>
    <property type="evidence" value="ECO:0007669"/>
    <property type="project" value="UniProtKB-SubCell"/>
</dbReference>
<dbReference type="GO" id="GO:0003700">
    <property type="term" value="F:DNA-binding transcription factor activity"/>
    <property type="evidence" value="ECO:0007669"/>
    <property type="project" value="InterPro"/>
</dbReference>
<dbReference type="GO" id="GO:0043565">
    <property type="term" value="F:sequence-specific DNA binding"/>
    <property type="evidence" value="ECO:0000318"/>
    <property type="project" value="GO_Central"/>
</dbReference>
<dbReference type="GO" id="GO:0009089">
    <property type="term" value="P:lysine biosynthetic process via diaminopimelate"/>
    <property type="evidence" value="ECO:0000314"/>
    <property type="project" value="EcoCyc"/>
</dbReference>
<dbReference type="GO" id="GO:0010628">
    <property type="term" value="P:positive regulation of gene expression"/>
    <property type="evidence" value="ECO:0000315"/>
    <property type="project" value="EcoCyc"/>
</dbReference>
<dbReference type="CDD" id="cd08456">
    <property type="entry name" value="PBP2_LysR"/>
    <property type="match status" value="1"/>
</dbReference>
<dbReference type="FunFam" id="1.10.10.10:FF:000174">
    <property type="entry name" value="LysR family transcriptional regulator"/>
    <property type="match status" value="1"/>
</dbReference>
<dbReference type="FunFam" id="3.40.190.290:FF:000007">
    <property type="entry name" value="LysR family transcriptional regulator"/>
    <property type="match status" value="1"/>
</dbReference>
<dbReference type="Gene3D" id="3.40.190.290">
    <property type="match status" value="1"/>
</dbReference>
<dbReference type="Gene3D" id="1.10.10.10">
    <property type="entry name" value="Winged helix-like DNA-binding domain superfamily/Winged helix DNA-binding domain"/>
    <property type="match status" value="1"/>
</dbReference>
<dbReference type="InterPro" id="IPR037414">
    <property type="entry name" value="LysR_PBP2"/>
</dbReference>
<dbReference type="InterPro" id="IPR005119">
    <property type="entry name" value="LysR_subst-bd"/>
</dbReference>
<dbReference type="InterPro" id="IPR000847">
    <property type="entry name" value="Tscrpt_reg_HTH_LysR"/>
</dbReference>
<dbReference type="InterPro" id="IPR036388">
    <property type="entry name" value="WH-like_DNA-bd_sf"/>
</dbReference>
<dbReference type="InterPro" id="IPR036390">
    <property type="entry name" value="WH_DNA-bd_sf"/>
</dbReference>
<dbReference type="NCBIfam" id="NF008239">
    <property type="entry name" value="PRK11013.1"/>
    <property type="match status" value="1"/>
</dbReference>
<dbReference type="PANTHER" id="PTHR30427">
    <property type="entry name" value="TRANSCRIPTIONAL ACTIVATOR PROTEIN LYSR"/>
    <property type="match status" value="1"/>
</dbReference>
<dbReference type="PANTHER" id="PTHR30427:SF1">
    <property type="entry name" value="TRANSCRIPTIONAL ACTIVATOR PROTEIN LYSR"/>
    <property type="match status" value="1"/>
</dbReference>
<dbReference type="Pfam" id="PF00126">
    <property type="entry name" value="HTH_1"/>
    <property type="match status" value="1"/>
</dbReference>
<dbReference type="Pfam" id="PF03466">
    <property type="entry name" value="LysR_substrate"/>
    <property type="match status" value="1"/>
</dbReference>
<dbReference type="PRINTS" id="PR00039">
    <property type="entry name" value="HTHLYSR"/>
</dbReference>
<dbReference type="SUPFAM" id="SSF53850">
    <property type="entry name" value="Periplasmic binding protein-like II"/>
    <property type="match status" value="1"/>
</dbReference>
<dbReference type="SUPFAM" id="SSF46785">
    <property type="entry name" value="Winged helix' DNA-binding domain"/>
    <property type="match status" value="1"/>
</dbReference>
<dbReference type="PROSITE" id="PS50931">
    <property type="entry name" value="HTH_LYSR"/>
    <property type="match status" value="1"/>
</dbReference>
<protein>
    <recommendedName>
        <fullName>Transcriptional activator protein LysR</fullName>
    </recommendedName>
</protein>
<accession>P03030</accession>
<accession>Q2M9Z8</accession>
<accession>Q46936</accession>
<feature type="chain" id="PRO_0000105669" description="Transcriptional activator protein LysR">
    <location>
        <begin position="1"/>
        <end position="311"/>
    </location>
</feature>
<feature type="domain" description="HTH lysR-type" evidence="1">
    <location>
        <begin position="1"/>
        <end position="61"/>
    </location>
</feature>
<feature type="DNA-binding region" description="H-T-H motif" evidence="1">
    <location>
        <begin position="21"/>
        <end position="40"/>
    </location>
</feature>
<gene>
    <name type="primary">lysR</name>
    <name type="ordered locus">b2839</name>
    <name type="ordered locus">JW2807</name>
</gene>
<proteinExistence type="inferred from homology"/>
<comment type="function">
    <text>This protein activates the transcription of the lysA gene encoding diaminopimelate decarboxylase. LysR is also a negative regulator of its own expression.</text>
</comment>
<comment type="subcellular location">
    <subcellularLocation>
        <location>Cytoplasm</location>
    </subcellularLocation>
</comment>
<comment type="similarity">
    <text evidence="2">Belongs to the LysR transcriptional regulatory family.</text>
</comment>
<organism>
    <name type="scientific">Escherichia coli (strain K12)</name>
    <dbReference type="NCBI Taxonomy" id="83333"/>
    <lineage>
        <taxon>Bacteria</taxon>
        <taxon>Pseudomonadati</taxon>
        <taxon>Pseudomonadota</taxon>
        <taxon>Gammaproteobacteria</taxon>
        <taxon>Enterobacterales</taxon>
        <taxon>Enterobacteriaceae</taxon>
        <taxon>Escherichia</taxon>
    </lineage>
</organism>
<reference key="1">
    <citation type="journal article" date="1983" name="J. Mol. Biol.">
        <title>Regulation of diaminopimelate decarboxylase synthesis in Escherichia coli. III. Nucleotide sequence and regulation of the lysR gene.</title>
        <authorList>
            <person name="Stragier P."/>
            <person name="Patte J.-C."/>
        </authorList>
    </citation>
    <scope>NUCLEOTIDE SEQUENCE [GENOMIC DNA]</scope>
</reference>
<reference key="2">
    <citation type="journal article" date="1997" name="Science">
        <title>The complete genome sequence of Escherichia coli K-12.</title>
        <authorList>
            <person name="Blattner F.R."/>
            <person name="Plunkett G. III"/>
            <person name="Bloch C.A."/>
            <person name="Perna N.T."/>
            <person name="Burland V."/>
            <person name="Riley M."/>
            <person name="Collado-Vides J."/>
            <person name="Glasner J.D."/>
            <person name="Rode C.K."/>
            <person name="Mayhew G.F."/>
            <person name="Gregor J."/>
            <person name="Davis N.W."/>
            <person name="Kirkpatrick H.A."/>
            <person name="Goeden M.A."/>
            <person name="Rose D.J."/>
            <person name="Mau B."/>
            <person name="Shao Y."/>
        </authorList>
    </citation>
    <scope>NUCLEOTIDE SEQUENCE [LARGE SCALE GENOMIC DNA]</scope>
    <source>
        <strain>K12 / MG1655 / ATCC 47076</strain>
    </source>
</reference>
<reference key="3">
    <citation type="journal article" date="2006" name="Mol. Syst. Biol.">
        <title>Highly accurate genome sequences of Escherichia coli K-12 strains MG1655 and W3110.</title>
        <authorList>
            <person name="Hayashi K."/>
            <person name="Morooka N."/>
            <person name="Yamamoto Y."/>
            <person name="Fujita K."/>
            <person name="Isono K."/>
            <person name="Choi S."/>
            <person name="Ohtsubo E."/>
            <person name="Baba T."/>
            <person name="Wanner B.L."/>
            <person name="Mori H."/>
            <person name="Horiuchi T."/>
        </authorList>
    </citation>
    <scope>NUCLEOTIDE SEQUENCE [LARGE SCALE GENOMIC DNA]</scope>
    <source>
        <strain>K12 / W3110 / ATCC 27325 / DSM 5911</strain>
    </source>
</reference>
<reference key="4">
    <citation type="journal article" date="1988" name="J. Biol. Chem.">
        <title>The cloning, DNA sequence, and overexpression of the gene araE coding for arabinose-proton symport in Escherichia coli K12.</title>
        <authorList>
            <person name="Maiden M.C.J."/>
            <person name="Jones-Mortimer M.C."/>
            <person name="Henderson P.J.F."/>
        </authorList>
    </citation>
    <scope>NUCLEOTIDE SEQUENCE [GENOMIC DNA] OF 244-311</scope>
    <source>
        <strain>K12 / JM2433</strain>
    </source>
</reference>
<evidence type="ECO:0000255" key="1">
    <source>
        <dbReference type="PROSITE-ProRule" id="PRU00253"/>
    </source>
</evidence>
<evidence type="ECO:0000305" key="2"/>
<sequence>MAAVNLRHIEIFHAVMTAGSLTEAAHLLHTSQPTVSRELARFEKVIGLKLFERVRGRLHPTVQGLRLFEEVQRSWYGLDRIVSAAESLREFRQGELSIACLPVFSQSFLPQLLQPFLARYPDVSLNIVPQESPLLEEWLSAQRHDLGLTETLHTPAGTERTELLSLDEVCVLPPGHPLAVKKVLTPDDFQGENYISLSRTDSYRQLLDQLFTEHQVKRRMIVETHSAASVCAMVRAGVGISVVNPLTALDYAASGLVVRRFSIAVPFTVSLIRPLHRPSSALVQAFSGHLQAGLPKLVTSLDAILSSATTA</sequence>
<name>LYSR_ECOLI</name>
<keyword id="KW-0010">Activator</keyword>
<keyword id="KW-0963">Cytoplasm</keyword>
<keyword id="KW-0238">DNA-binding</keyword>
<keyword id="KW-1185">Reference proteome</keyword>
<keyword id="KW-0678">Repressor</keyword>
<keyword id="KW-0804">Transcription</keyword>
<keyword id="KW-0805">Transcription regulation</keyword>